<evidence type="ECO:0000269" key="1">
    <source>
    </source>
</evidence>
<evidence type="ECO:0000269" key="2">
    <source>
    </source>
</evidence>
<evidence type="ECO:0000269" key="3">
    <source>
    </source>
</evidence>
<evidence type="ECO:0000269" key="4">
    <source>
    </source>
</evidence>
<evidence type="ECO:0000269" key="5">
    <source>
    </source>
</evidence>
<evidence type="ECO:0000269" key="6">
    <source>
    </source>
</evidence>
<evidence type="ECO:0000269" key="7">
    <source>
    </source>
</evidence>
<evidence type="ECO:0000269" key="8">
    <source>
    </source>
</evidence>
<evidence type="ECO:0000305" key="9"/>
<feature type="chain" id="PRO_0000150892" description="Partitioning protein REP1">
    <location>
        <begin position="1"/>
        <end position="373"/>
    </location>
</feature>
<feature type="region of interest" description="Interaction with REP2 and self-association">
    <location>
        <begin position="1"/>
        <end position="129"/>
    </location>
</feature>
<feature type="region of interest" description="Interaction with REP2">
    <location>
        <begin position="1"/>
        <end position="76"/>
    </location>
</feature>
<feature type="region of interest" description="Nuclear localization">
    <location>
        <begin position="349"/>
        <end position="373"/>
    </location>
</feature>
<feature type="sequence variant" description="In strain: ATCC 44827 and ATCC 7754.">
    <original>A</original>
    <variation>V</variation>
    <location>
        <position position="8"/>
    </location>
</feature>
<feature type="sequence variant" description="In strain: ATCC 44827 and ATCC 7754.">
    <original>V</original>
    <variation>I</variation>
    <location>
        <position position="22"/>
    </location>
</feature>
<feature type="sequence variant" description="In strain: ATCC 44827 and ATCC 7754.">
    <original>P</original>
    <variation>S</variation>
    <location>
        <position position="38"/>
    </location>
</feature>
<feature type="sequence variant" description="In strain: ATCC 44827 and ATCC 7754.">
    <original>I</original>
    <variation>R</variation>
    <location>
        <position position="87"/>
    </location>
</feature>
<feature type="sequence variant" description="In strain: ATCC 44827 and ATCC 7754.">
    <original>T</original>
    <variation>A</variation>
    <location>
        <position position="107"/>
    </location>
</feature>
<feature type="sequence variant" description="In strain: ATCC 44827.">
    <original>GLDINVKGTLNRR</original>
    <variation>VRYQCKRHVKPQ</variation>
    <location>
        <begin position="111"/>
        <end position="123"/>
    </location>
</feature>
<feature type="sequence variant" description="In strain: ATCC 7754.">
    <original>K</original>
    <variation>R</variation>
    <location>
        <position position="117"/>
    </location>
</feature>
<feature type="sequence variant" description="In strain: ATCC 44827.">
    <original>KG</original>
    <variation>N</variation>
    <location>
        <begin position="131"/>
        <end position="132"/>
    </location>
</feature>
<feature type="sequence variant" description="In strain: ATCC 44827 and ATCC 7754.">
    <original>A</original>
    <variation>D</variation>
    <location>
        <position position="149"/>
    </location>
</feature>
<feature type="sequence variant" description="In strain: ATCC 44827 and ATCC 7754.">
    <original>Q</original>
    <variation>K</variation>
    <location>
        <position position="177"/>
    </location>
</feature>
<feature type="sequence variant" description="In strain: ATCC 44827 and ATCC 7754.">
    <original>P</original>
    <variation>Q</variation>
    <location>
        <position position="184"/>
    </location>
</feature>
<feature type="sequence variant" description="In strain: ATCC 44827 and ATCC 7754.">
    <original>I</original>
    <variation>V</variation>
    <location>
        <position position="198"/>
    </location>
</feature>
<feature type="sequence variant" description="In strain: ATCC 44827 and ATCC 7754.">
    <original>K</original>
    <variation>R</variation>
    <location>
        <position position="204"/>
    </location>
</feature>
<feature type="sequence variant" description="In strain: ATCC 44827 and ATCC 7754.">
    <original>DKGH</original>
    <variation>GL</variation>
    <location>
        <begin position="211"/>
        <end position="214"/>
    </location>
</feature>
<feature type="sequence variant" description="In strain: ATCC 44827.">
    <original>LPP</original>
    <variation>QPR</variation>
    <location>
        <begin position="220"/>
        <end position="222"/>
    </location>
</feature>
<feature type="sequence variant" description="In strain: ATCC 44827.">
    <original>DPSR</original>
    <variation>NSSP</variation>
    <location>
        <begin position="225"/>
        <end position="228"/>
    </location>
</feature>
<feature type="sequence variant" description="In strain: ATCC 44827.">
    <original>N</original>
    <variation>S</variation>
    <location>
        <position position="231"/>
    </location>
</feature>
<feature type="sequence variant" description="In strain: ATCC 44827 and ATCC 7754.">
    <original>SLT</original>
    <variation>NLI</variation>
    <location>
        <begin position="239"/>
        <end position="241"/>
    </location>
</feature>
<feature type="sequence variant" description="In strain: ATCC 44827 and ATCC 7754.">
    <original>E</original>
    <variation>A</variation>
    <location>
        <position position="246"/>
    </location>
</feature>
<feature type="sequence variant" description="In strain: ATCC 44827 and ATCC 7754.">
    <original>G</original>
    <variation>S</variation>
    <location>
        <position position="253"/>
    </location>
</feature>
<feature type="sequence variant" description="In strain: ATCC 7754.">
    <original>K</original>
    <variation>R</variation>
    <location>
        <position position="261"/>
    </location>
</feature>
<feature type="sequence variant" description="In strain: ATCC 44827 and ATCC 7754.">
    <original>T</original>
    <variation>A</variation>
    <location>
        <position position="270"/>
    </location>
</feature>
<feature type="sequence variant" description="In strain: ATCC 44827 and ATCC 7754.">
    <original>DG</original>
    <variation>NE</variation>
    <location>
        <begin position="372"/>
        <end position="373"/>
    </location>
</feature>
<feature type="mutagenesis site" description="Abolishes interaction with REP2 and STB." evidence="4">
    <original>T</original>
    <variation>K</variation>
    <location>
        <position position="32"/>
    </location>
</feature>
<feature type="mutagenesis site" description="Abolishes interaction with REP2, but not with STB." evidence="4">
    <original>Y</original>
    <variation>A</variation>
    <location>
        <position position="43"/>
    </location>
</feature>
<feature type="mutagenesis site" description="Abolishes interaction with REP2, but not with STB." evidence="4">
    <original>A</original>
    <variation>D</variation>
    <location>
        <position position="50"/>
    </location>
</feature>
<feature type="mutagenesis site" description="Abolishes interaction with REP2, but not with STB." evidence="4">
    <original>V</original>
    <variation>K</variation>
    <location>
        <position position="78"/>
    </location>
</feature>
<feature type="mutagenesis site" description="Abolishes interaction with REP2, but not with STB." evidence="4">
    <original>S</original>
    <variation>Y</variation>
    <location>
        <position position="93"/>
    </location>
</feature>
<feature type="mutagenesis site" description="Abolishes interaction with STB, but not with REP2." evidence="4">
    <original>L</original>
    <variation>S</variation>
    <location>
        <position position="154"/>
    </location>
</feature>
<feature type="mutagenesis site" description="Abolishes interaction with REP2, but not with STB." evidence="4">
    <original>E</original>
    <variation>A</variation>
    <location>
        <position position="200"/>
    </location>
</feature>
<feature type="mutagenesis site" description="Abolishes interaction with REP2, but not with STB." evidence="4">
    <original>A</original>
    <variation>P</variation>
    <location>
        <position position="276"/>
    </location>
</feature>
<feature type="mutagenesis site" description="Abolishes interaction with STB, but not with REP2." evidence="4">
    <original>K</original>
    <variation>Q</variation>
    <location>
        <position position="297"/>
    </location>
</feature>
<feature type="mutagenesis site" description="Abolishes interaction with REP2, but not with STB." evidence="4">
    <original>Y</original>
    <variation>L</variation>
    <location>
        <position position="301"/>
    </location>
</feature>
<feature type="mutagenesis site" description="Abolishes interaction with REP2, but not with STB." evidence="4">
    <original>I</original>
    <variation>Y</variation>
    <location>
        <position position="308"/>
    </location>
</feature>
<feature type="mutagenesis site" description="Abolishes interaction with STB, but not with REP2." evidence="4">
    <original>Y</original>
    <variation>I</variation>
    <location>
        <position position="317"/>
    </location>
</feature>
<feature type="mutagenesis site" description="Abolishes interaction with STB, but not with REP2." evidence="4">
    <original>S</original>
    <variation>Y</variation>
    <location>
        <position position="330"/>
    </location>
</feature>
<comment type="function">
    <text evidence="1 3 4 5 6">Part of the plasmid partitioning system, which ensures the equal distribution of replicated plasmid molecules to daughter cells. The plasmids exist as well-organized plasmid foci within the nucleus that stay together throughout the cell-cycle and act as entity during segregation, effetively reducing copy number to one. Plasmid partitioning requires the proteins REP1, REP2, and a cis-acting locus STB (REP3). REP1-REP2 stably associate with CSE4-containing chromatin at STB during S-phase, marking the locus with a centromeric tag, and thereby probably catching mitotic spindle microtubules to the plasmid cluster and coupling plasmid segregation to chromosome segregation. REP1-REP2 are required to recruit the cohesin complex to the STB locus for pairing of the replicated plasmid cluster, a prerequisite for successful plasmid segregation. REP1-REP2 also negatively regulate expression of site-specific recombinase FLP and of RAF1.</text>
</comment>
<comment type="subunit">
    <text evidence="2 4 7">Interacts with REP2.</text>
</comment>
<comment type="interaction">
    <interactant intactId="EBI-14929">
        <id>P03871</id>
    </interactant>
    <interactant intactId="EBI-14929">
        <id>P03871</id>
        <label>REP1</label>
    </interactant>
    <organismsDiffer>false</organismsDiffer>
    <experiments>5</experiments>
</comment>
<comment type="interaction">
    <interactant intactId="EBI-14929">
        <id>P03871</id>
    </interactant>
    <interactant intactId="EBI-2125362">
        <id>P03872</id>
        <label>REP2</label>
    </interactant>
    <organismsDiffer>false</organismsDiffer>
    <experiments>7</experiments>
</comment>
<comment type="subcellular location">
    <subcellularLocation>
        <location evidence="1 7 8">Nucleus</location>
    </subcellularLocation>
    <text>Colocalizes with the STB locus of the 2-micron plasmid as foci in the nucleus near the spindle pole body. Is expelled from STB during a short interval between late G1 and early S phases.</text>
</comment>
<comment type="miscellaneous">
    <text>The plasmid 2-micron circle is a extrachromosomal element that resides in the nucleus and propagates itself stably in host cell populations. It provides no obvious advantage to the host but imposes no significant disadvantage either at its steady-state copy number of 40-60 molecules/cell.</text>
</comment>
<comment type="sequence caution" evidence="9">
    <conflict type="erroneous initiation">
        <sequence resource="EMBL-CDS" id="AAA34966"/>
    </conflict>
</comment>
<comment type="sequence caution" evidence="9">
    <conflict type="erroneous initiation">
        <sequence resource="EMBL-CDS" id="CAA39080"/>
    </conflict>
</comment>
<protein>
    <recommendedName>
        <fullName>Partitioning protein REP1</fullName>
        <shortName>R1</shortName>
    </recommendedName>
    <alternativeName>
        <fullName>Protein Baker</fullName>
    </alternativeName>
    <alternativeName>
        <fullName>Trans-acting factor B</fullName>
    </alternativeName>
</protein>
<keyword id="KW-0539">Nucleus</keyword>
<keyword id="KW-0614">Plasmid</keyword>
<keyword id="KW-0616">Plasmid partition</keyword>
<keyword id="KW-1185">Reference proteome</keyword>
<dbReference type="EMBL" id="J01347">
    <property type="protein sequence ID" value="AAB59341.1"/>
    <property type="molecule type" value="Genomic_DNA"/>
</dbReference>
<dbReference type="EMBL" id="M31942">
    <property type="protein sequence ID" value="AAA34966.1"/>
    <property type="status" value="ALT_INIT"/>
    <property type="molecule type" value="Genomic_DNA"/>
</dbReference>
<dbReference type="EMBL" id="X55437">
    <property type="protein sequence ID" value="CAA39080.1"/>
    <property type="status" value="ALT_INIT"/>
    <property type="molecule type" value="Genomic_DNA"/>
</dbReference>
<dbReference type="PIR" id="A04503">
    <property type="entry name" value="PDBYB"/>
</dbReference>
<dbReference type="PIR" id="S11187">
    <property type="entry name" value="S11187"/>
</dbReference>
<dbReference type="PIR" id="S40417">
    <property type="entry name" value="S40417"/>
</dbReference>
<dbReference type="DIP" id="DIP-7698N"/>
<dbReference type="FunCoup" id="P03871">
    <property type="interactions" value="225"/>
</dbReference>
<dbReference type="IntAct" id="P03871">
    <property type="interactions" value="12"/>
</dbReference>
<dbReference type="iPTMnet" id="P03871"/>
<dbReference type="PeptideAtlas" id="P03871"/>
<dbReference type="AGR" id="SGD:S000029675"/>
<dbReference type="SGD" id="S000029675">
    <property type="gene designation" value="REP1"/>
</dbReference>
<dbReference type="InParanoid" id="P03871"/>
<dbReference type="PRO" id="PR:P03871"/>
<dbReference type="Proteomes" id="UP000002311">
    <property type="component" value="Plasmid 2-micron"/>
</dbReference>
<dbReference type="RNAct" id="P03871">
    <property type="molecule type" value="protein"/>
</dbReference>
<dbReference type="GO" id="GO:0005634">
    <property type="term" value="C:nucleus"/>
    <property type="evidence" value="ECO:0000314"/>
    <property type="project" value="SGD"/>
</dbReference>
<dbReference type="GO" id="GO:0042802">
    <property type="term" value="F:identical protein binding"/>
    <property type="evidence" value="ECO:0000353"/>
    <property type="project" value="IntAct"/>
</dbReference>
<dbReference type="GO" id="GO:0030543">
    <property type="term" value="P:2-micrometer plasmid partitioning"/>
    <property type="evidence" value="ECO:0000314"/>
    <property type="project" value="SGD"/>
</dbReference>
<dbReference type="GO" id="GO:0008104">
    <property type="term" value="P:protein localization"/>
    <property type="evidence" value="ECO:0000314"/>
    <property type="project" value="SGD"/>
</dbReference>
<dbReference type="InterPro" id="IPR008897">
    <property type="entry name" value="Rep_fungi"/>
</dbReference>
<dbReference type="Pfam" id="PF05797">
    <property type="entry name" value="Rep_4"/>
    <property type="match status" value="1"/>
</dbReference>
<name>REP1_YEAST</name>
<proteinExistence type="evidence at protein level"/>
<geneLocation type="plasmid">
    <name>2-micron</name>
</geneLocation>
<organism>
    <name type="scientific">Saccharomyces cerevisiae (strain ATCC 204508 / S288c)</name>
    <name type="common">Baker's yeast</name>
    <dbReference type="NCBI Taxonomy" id="559292"/>
    <lineage>
        <taxon>Eukaryota</taxon>
        <taxon>Fungi</taxon>
        <taxon>Dikarya</taxon>
        <taxon>Ascomycota</taxon>
        <taxon>Saccharomycotina</taxon>
        <taxon>Saccharomycetes</taxon>
        <taxon>Saccharomycetales</taxon>
        <taxon>Saccharomycetaceae</taxon>
        <taxon>Saccharomyces</taxon>
    </lineage>
</organism>
<reference key="1">
    <citation type="journal article" date="1980" name="Nature">
        <title>Nucleotide sequence of the yeast plasmid.</title>
        <authorList>
            <person name="Hartley J.L."/>
            <person name="Donelson J.E."/>
        </authorList>
    </citation>
    <scope>NUCLEOTIDE SEQUENCE [GENOMIC DNA]</scope>
    <source>
        <strain>A364A D5</strain>
    </source>
</reference>
<reference key="2">
    <citation type="journal article" date="1990" name="Gene">
        <title>Heterogeneity among the 2 microns plasmids in Saccharomyces cerevisiae: a new sequence for the REP1 gene.</title>
        <authorList>
            <person name="Neuville P."/>
            <person name="Bonneu M."/>
            <person name="Aigle M."/>
        </authorList>
    </citation>
    <scope>NUCLEOTIDE SEQUENCE [GENOMIC DNA]</scope>
    <source>
        <strain>ATCC 44827 / SKQ2N</strain>
    </source>
</reference>
<reference key="3">
    <citation type="journal article" date="1991" name="J. Mol. Evol.">
        <title>Evidence for cis- and trans-acting element coevolution of the 2-microns circle genome in Saccharomyces cerevisiae.</title>
        <authorList>
            <person name="Xiao W."/>
            <person name="Pelcher L.E."/>
            <person name="Rank G.H."/>
        </authorList>
    </citation>
    <scope>NUCLEOTIDE SEQUENCE [GENOMIC DNA]</scope>
    <source>
        <strain>ATCC 7754</strain>
    </source>
</reference>
<reference key="4">
    <citation type="journal article" date="1979" name="Nucleic Acids Res.">
        <title>Sequence of 1019 nucleotides encompassing one of the inverted repeats from the yeast 2 micrometer plasmid.</title>
        <authorList>
            <person name="Hindley J."/>
            <person name="Phear G.A."/>
        </authorList>
    </citation>
    <scope>NUCLEOTIDE SEQUENCE [GENOMIC DNA] OF 330-373</scope>
</reference>
<reference key="5">
    <citation type="journal article" date="1987" name="EMBO J.">
        <title>Antagonistic controls regulate copy number of the yeast 2 micron plasmid.</title>
        <authorList>
            <person name="Murray J.A.H."/>
            <person name="Scarpa M."/>
            <person name="Rossi N."/>
            <person name="Cesareni G."/>
        </authorList>
    </citation>
    <scope>FUNCTION</scope>
</reference>
<reference key="6">
    <citation type="journal article" date="1997" name="J. Bacteriol.">
        <title>The 2 micrometer-plasmid-encoded Rep1 and Rep2 proteins interact with each other and colocalize to the Saccharomyces cerevisiae nucleus.</title>
        <authorList>
            <person name="Ahn Y.-T."/>
            <person name="Wu X.-L."/>
            <person name="Biswal S."/>
            <person name="Velmurugan S."/>
            <person name="Volkert F.C."/>
            <person name="Jayaram M."/>
        </authorList>
    </citation>
    <scope>SUBCELLULAR LOCATION</scope>
    <scope>INTERACTION WITH REP2</scope>
</reference>
<reference key="7">
    <citation type="journal article" date="1998" name="Mol. Cell. Biol.">
        <title>The 2 micrometer plasmid stability system: analyses of the interactions among plasmid- and host-encoded components.</title>
        <authorList>
            <person name="Velmurugan S."/>
            <person name="Ahn Y.-T."/>
            <person name="Yang X.-M."/>
            <person name="Wu X.-L."/>
            <person name="Jayaram M."/>
        </authorList>
    </citation>
    <scope>SUBCELLULAR LOCATION</scope>
</reference>
<reference key="8">
    <citation type="journal article" date="2000" name="J. Cell Biol.">
        <title>Partitioning of the 2-micrometer circle plasmid of Saccharomyces cerevisiae. Functional coordination with chromosome segregation and plasmid-encoded Rep protein distribution.</title>
        <authorList>
            <person name="Velmurugan S."/>
            <person name="Yang X.-M."/>
            <person name="Chan C.S.-M."/>
            <person name="Dobson M.J."/>
            <person name="Jayaram M."/>
        </authorList>
    </citation>
    <scope>FUNCTION</scope>
    <scope>SUBCELLULAR LOCATION</scope>
</reference>
<reference key="9">
    <citation type="journal article" date="2001" name="J. Bacteriol.">
        <title>Functional domains of yeast plasmid-encoded Rep proteins.</title>
        <authorList>
            <person name="Sengupta A."/>
            <person name="Blomqvist K."/>
            <person name="Pickett A.J."/>
            <person name="Zhang Y."/>
            <person name="Chew J.S.K."/>
            <person name="Dobson M.J."/>
        </authorList>
    </citation>
    <scope>INTERACTION WITH REP2</scope>
</reference>
<reference key="10">
    <citation type="journal article" date="2002" name="J. Cell Biol.">
        <title>The 2 micron plasmid purloins the yeast cohesin complex: a mechanism for coupling plasmid partitioning and chromosome segregation?</title>
        <authorList>
            <person name="Mehta S."/>
            <person name="Yang X.-M."/>
            <person name="Chan C.S.-M."/>
            <person name="Dobson M.J."/>
            <person name="Jayaram M."/>
            <person name="Velmurugan S."/>
        </authorList>
    </citation>
    <scope>FUNCTION</scope>
</reference>
<reference key="11">
    <citation type="journal article" date="2004" name="Mol. Cell. Biol.">
        <title>Mutations in a partitioning protein and altered chromatin structure at the partitioning locus prevent cohesin recruitment by the Saccharomyces cerevisiae plasmid and cause plasmid missegregation.</title>
        <authorList>
            <person name="Yang X.-M."/>
            <person name="Mehta S."/>
            <person name="Uzri D."/>
            <person name="Jayaram M."/>
            <person name="Velmurugan S."/>
        </authorList>
    </citation>
    <scope>FUNCTION</scope>
    <scope>INTERACTION WITH REP2 AND STB</scope>
    <scope>MUTAGENESIS OF THR-32; TYR-43; ALA-50; VAL-78; SER-93; LEU-154; GLU-200; ALA-276; LYS-297; TYR-301; ILE-308; TYR-317 AND SER-330</scope>
</reference>
<reference key="12">
    <citation type="journal article" date="2006" name="J. Cell Biol.">
        <title>The centromere-specific histone variant Cse4p (CENP-A) is essential for functional chromatin architecture at the yeast 2-micrometer circle partitioning locus and promotes equal plasmid segregation.</title>
        <authorList>
            <person name="Hajra S."/>
            <person name="Ghosh S.K."/>
            <person name="Jayaram M."/>
        </authorList>
    </citation>
    <scope>FUNCTION</scope>
</reference>
<accession>P03871</accession>
<accession>Q04137</accession>
<accession>Q07007</accession>
<sequence>MNGERLLACIKQCIMQHFQPMVYDESRCVIETTRGTFPVPDNYKKYKTLAFAFVGHVLNTDDTPVIEKELDWPDPALVYNTIVDRIINHPELSQFISVAFISQLKATIGEGLDINVKGTLNRRGKGIRRPKGVFFRYMESPFVNTKVTAFFSYLRDYNKIASEYHNNTKFILTFSCQAYWASGPNFSALKNVIRCSIIHEYISKFVEREQDKGHIGDQELPPEEDPSRELNNVQHEVNSLTEQDAEADEGLWGEIDSLCEKWQSEAEDQTEAEIIADRIIGNSQRMANLKIRRTKFKSVLYHILKELIQSQGTVKVYRGSSFSHDSIKISLHYEEQHITAVWVYLTVKFEEHWKPVDVEVEFRCKFKERKVDG</sequence>
<gene>
    <name type="primary">REP1</name>
    <name type="ordered locus">R0020C</name>
</gene>